<proteinExistence type="inferred from homology"/>
<protein>
    <recommendedName>
        <fullName evidence="1">Putative membrane protein insertion efficiency factor</fullName>
    </recommendedName>
</protein>
<sequence length="86" mass="9833">MSVMLRRLVVLPVRFYQYCISPLFPPACRYVPTCSAYTAEAVMRHGVMRGLWLAARRILRCHPWCAGGHDPVPPVPPQRYPSAQEH</sequence>
<accession>A1VER8</accession>
<name>YIDD_NITV4</name>
<reference key="1">
    <citation type="journal article" date="2009" name="Environ. Microbiol.">
        <title>Contribution of mobile genetic elements to Desulfovibrio vulgaris genome plasticity.</title>
        <authorList>
            <person name="Walker C.B."/>
            <person name="Stolyar S."/>
            <person name="Chivian D."/>
            <person name="Pinel N."/>
            <person name="Gabster J.A."/>
            <person name="Dehal P.S."/>
            <person name="He Z."/>
            <person name="Yang Z.K."/>
            <person name="Yen H.C."/>
            <person name="Zhou J."/>
            <person name="Wall J.D."/>
            <person name="Hazen T.C."/>
            <person name="Arkin A.P."/>
            <person name="Stahl D.A."/>
        </authorList>
    </citation>
    <scope>NUCLEOTIDE SEQUENCE [LARGE SCALE GENOMIC DNA]</scope>
    <source>
        <strain>DP4</strain>
    </source>
</reference>
<dbReference type="EMBL" id="CP000527">
    <property type="protein sequence ID" value="ABM28934.1"/>
    <property type="molecule type" value="Genomic_DNA"/>
</dbReference>
<dbReference type="KEGG" id="dvl:Dvul_1918"/>
<dbReference type="HOGENOM" id="CLU_144811_6_1_7"/>
<dbReference type="Proteomes" id="UP000009173">
    <property type="component" value="Chromosome"/>
</dbReference>
<dbReference type="GO" id="GO:0005886">
    <property type="term" value="C:plasma membrane"/>
    <property type="evidence" value="ECO:0007669"/>
    <property type="project" value="UniProtKB-SubCell"/>
</dbReference>
<dbReference type="HAMAP" id="MF_00386">
    <property type="entry name" value="UPF0161_YidD"/>
    <property type="match status" value="1"/>
</dbReference>
<dbReference type="InterPro" id="IPR002696">
    <property type="entry name" value="Membr_insert_effic_factor_YidD"/>
</dbReference>
<dbReference type="NCBIfam" id="TIGR00278">
    <property type="entry name" value="membrane protein insertion efficiency factor YidD"/>
    <property type="match status" value="1"/>
</dbReference>
<dbReference type="PANTHER" id="PTHR33383">
    <property type="entry name" value="MEMBRANE PROTEIN INSERTION EFFICIENCY FACTOR-RELATED"/>
    <property type="match status" value="1"/>
</dbReference>
<dbReference type="PANTHER" id="PTHR33383:SF1">
    <property type="entry name" value="MEMBRANE PROTEIN INSERTION EFFICIENCY FACTOR-RELATED"/>
    <property type="match status" value="1"/>
</dbReference>
<dbReference type="Pfam" id="PF01809">
    <property type="entry name" value="YidD"/>
    <property type="match status" value="1"/>
</dbReference>
<dbReference type="SMART" id="SM01234">
    <property type="entry name" value="Haemolytic"/>
    <property type="match status" value="1"/>
</dbReference>
<feature type="chain" id="PRO_1000013089" description="Putative membrane protein insertion efficiency factor">
    <location>
        <begin position="1"/>
        <end position="86"/>
    </location>
</feature>
<feature type="region of interest" description="Disordered" evidence="2">
    <location>
        <begin position="66"/>
        <end position="86"/>
    </location>
</feature>
<evidence type="ECO:0000255" key="1">
    <source>
        <dbReference type="HAMAP-Rule" id="MF_00386"/>
    </source>
</evidence>
<evidence type="ECO:0000256" key="2">
    <source>
        <dbReference type="SAM" id="MobiDB-lite"/>
    </source>
</evidence>
<comment type="function">
    <text evidence="1">Could be involved in insertion of integral membrane proteins into the membrane.</text>
</comment>
<comment type="subcellular location">
    <subcellularLocation>
        <location evidence="1">Cell inner membrane</location>
        <topology evidence="1">Peripheral membrane protein</topology>
        <orientation evidence="1">Cytoplasmic side</orientation>
    </subcellularLocation>
</comment>
<comment type="similarity">
    <text evidence="1">Belongs to the UPF0161 family.</text>
</comment>
<organism>
    <name type="scientific">Nitratidesulfovibrio vulgaris (strain DP4)</name>
    <name type="common">Desulfovibrio vulgaris</name>
    <dbReference type="NCBI Taxonomy" id="391774"/>
    <lineage>
        <taxon>Bacteria</taxon>
        <taxon>Pseudomonadati</taxon>
        <taxon>Thermodesulfobacteriota</taxon>
        <taxon>Desulfovibrionia</taxon>
        <taxon>Desulfovibrionales</taxon>
        <taxon>Desulfovibrionaceae</taxon>
        <taxon>Nitratidesulfovibrio</taxon>
    </lineage>
</organism>
<keyword id="KW-0997">Cell inner membrane</keyword>
<keyword id="KW-1003">Cell membrane</keyword>
<keyword id="KW-0472">Membrane</keyword>
<gene>
    <name type="ordered locus">Dvul_1918</name>
</gene>